<name>HPRK_RALPJ</name>
<comment type="function">
    <text evidence="1">Catalyzes the ATP- as well as the pyrophosphate-dependent phosphorylation of a specific serine residue in HPr, a phosphocarrier protein of the phosphoenolpyruvate-dependent sugar phosphotransferase system (PTS). HprK/P also catalyzes the pyrophosphate-producing, inorganic phosphate-dependent dephosphorylation (phosphorolysis) of seryl-phosphorylated HPr (P-Ser-HPr).</text>
</comment>
<comment type="catalytic activity">
    <reaction evidence="1">
        <text>[HPr protein]-L-serine + ATP = [HPr protein]-O-phospho-L-serine + ADP + H(+)</text>
        <dbReference type="Rhea" id="RHEA:46600"/>
        <dbReference type="Rhea" id="RHEA-COMP:11602"/>
        <dbReference type="Rhea" id="RHEA-COMP:11603"/>
        <dbReference type="ChEBI" id="CHEBI:15378"/>
        <dbReference type="ChEBI" id="CHEBI:29999"/>
        <dbReference type="ChEBI" id="CHEBI:30616"/>
        <dbReference type="ChEBI" id="CHEBI:83421"/>
        <dbReference type="ChEBI" id="CHEBI:456216"/>
    </reaction>
</comment>
<comment type="catalytic activity">
    <reaction evidence="1">
        <text>[HPr protein]-O-phospho-L-serine + phosphate + H(+) = [HPr protein]-L-serine + diphosphate</text>
        <dbReference type="Rhea" id="RHEA:46604"/>
        <dbReference type="Rhea" id="RHEA-COMP:11602"/>
        <dbReference type="Rhea" id="RHEA-COMP:11603"/>
        <dbReference type="ChEBI" id="CHEBI:15378"/>
        <dbReference type="ChEBI" id="CHEBI:29999"/>
        <dbReference type="ChEBI" id="CHEBI:33019"/>
        <dbReference type="ChEBI" id="CHEBI:43474"/>
        <dbReference type="ChEBI" id="CHEBI:83421"/>
    </reaction>
</comment>
<comment type="cofactor">
    <cofactor evidence="1">
        <name>Mg(2+)</name>
        <dbReference type="ChEBI" id="CHEBI:18420"/>
    </cofactor>
</comment>
<comment type="subunit">
    <text evidence="1">Homohexamer.</text>
</comment>
<comment type="domain">
    <text evidence="1">The Walker A ATP-binding motif also binds Pi and PPi.</text>
</comment>
<comment type="miscellaneous">
    <text evidence="1">Both phosphorylation and phosphorolysis are carried out by the same active site and suggest a common mechanism for both reactions.</text>
</comment>
<comment type="similarity">
    <text evidence="1">Belongs to the HPrK/P family.</text>
</comment>
<accession>B2UES6</accession>
<sequence length="324" mass="35678">MELTGVIAQSIFDDNAADLKLSWVAGLEGADRAFDVDFAKEATSAADLVGHLNLIHPNRIQVLGKPEITYYQRLSEENRKRQMGELILLEPPFLVVADGVDPPPDLELRCTRSSTPLFTSPISSAAVIDHLRLYLSRISAPRVTMHGVFLDILGMGVLIMGDSGLGKSELGLELISRGHGLVADDAVDFVRLGPDFIEGRCPPLLQNLLEVRGLGLLDIKTIFGETAVRRKMKIKLIVQLVRRNDGEFERLPLDSQYLDVLGLPIHMVKIQVAAGRNLAVLVEAAVRNTILRLRGIDTLRDFMDRQRAAMQAEAASHSPQGRLL</sequence>
<organism>
    <name type="scientific">Ralstonia pickettii (strain 12J)</name>
    <dbReference type="NCBI Taxonomy" id="402626"/>
    <lineage>
        <taxon>Bacteria</taxon>
        <taxon>Pseudomonadati</taxon>
        <taxon>Pseudomonadota</taxon>
        <taxon>Betaproteobacteria</taxon>
        <taxon>Burkholderiales</taxon>
        <taxon>Burkholderiaceae</taxon>
        <taxon>Ralstonia</taxon>
    </lineage>
</organism>
<dbReference type="EC" id="2.7.11.-" evidence="1"/>
<dbReference type="EC" id="2.7.4.-" evidence="1"/>
<dbReference type="EMBL" id="CP001068">
    <property type="protein sequence ID" value="ACD25422.1"/>
    <property type="molecule type" value="Genomic_DNA"/>
</dbReference>
<dbReference type="SMR" id="B2UES6"/>
<dbReference type="STRING" id="402626.Rpic_0260"/>
<dbReference type="KEGG" id="rpi:Rpic_0260"/>
<dbReference type="eggNOG" id="COG1493">
    <property type="taxonomic scope" value="Bacteria"/>
</dbReference>
<dbReference type="HOGENOM" id="CLU_052030_0_2_4"/>
<dbReference type="GO" id="GO:0005524">
    <property type="term" value="F:ATP binding"/>
    <property type="evidence" value="ECO:0007669"/>
    <property type="project" value="UniProtKB-UniRule"/>
</dbReference>
<dbReference type="GO" id="GO:0000287">
    <property type="term" value="F:magnesium ion binding"/>
    <property type="evidence" value="ECO:0007669"/>
    <property type="project" value="UniProtKB-UniRule"/>
</dbReference>
<dbReference type="GO" id="GO:0000155">
    <property type="term" value="F:phosphorelay sensor kinase activity"/>
    <property type="evidence" value="ECO:0007669"/>
    <property type="project" value="InterPro"/>
</dbReference>
<dbReference type="GO" id="GO:0004674">
    <property type="term" value="F:protein serine/threonine kinase activity"/>
    <property type="evidence" value="ECO:0007669"/>
    <property type="project" value="UniProtKB-KW"/>
</dbReference>
<dbReference type="GO" id="GO:0004712">
    <property type="term" value="F:protein serine/threonine/tyrosine kinase activity"/>
    <property type="evidence" value="ECO:0007669"/>
    <property type="project" value="UniProtKB-UniRule"/>
</dbReference>
<dbReference type="GO" id="GO:0006109">
    <property type="term" value="P:regulation of carbohydrate metabolic process"/>
    <property type="evidence" value="ECO:0007669"/>
    <property type="project" value="UniProtKB-UniRule"/>
</dbReference>
<dbReference type="CDD" id="cd01918">
    <property type="entry name" value="HprK_C"/>
    <property type="match status" value="1"/>
</dbReference>
<dbReference type="FunFam" id="3.40.50.300:FF:000174">
    <property type="entry name" value="HPr kinase/phosphorylase"/>
    <property type="match status" value="1"/>
</dbReference>
<dbReference type="Gene3D" id="3.40.1390.20">
    <property type="entry name" value="HprK N-terminal domain-like"/>
    <property type="match status" value="1"/>
</dbReference>
<dbReference type="Gene3D" id="3.40.50.300">
    <property type="entry name" value="P-loop containing nucleotide triphosphate hydrolases"/>
    <property type="match status" value="1"/>
</dbReference>
<dbReference type="HAMAP" id="MF_01249">
    <property type="entry name" value="HPr_kinase"/>
    <property type="match status" value="1"/>
</dbReference>
<dbReference type="InterPro" id="IPR003755">
    <property type="entry name" value="HPr(Ser)_kin/Pase"/>
</dbReference>
<dbReference type="InterPro" id="IPR011104">
    <property type="entry name" value="Hpr_kin/Pase_C"/>
</dbReference>
<dbReference type="InterPro" id="IPR011126">
    <property type="entry name" value="Hpr_kin/Pase_Hpr_N"/>
</dbReference>
<dbReference type="InterPro" id="IPR027417">
    <property type="entry name" value="P-loop_NTPase"/>
</dbReference>
<dbReference type="InterPro" id="IPR028979">
    <property type="entry name" value="Ser_kin/Pase_Hpr-like_N_sf"/>
</dbReference>
<dbReference type="NCBIfam" id="TIGR00679">
    <property type="entry name" value="hpr-ser"/>
    <property type="match status" value="1"/>
</dbReference>
<dbReference type="PANTHER" id="PTHR30305:SF1">
    <property type="entry name" value="HPR KINASE_PHOSPHORYLASE"/>
    <property type="match status" value="1"/>
</dbReference>
<dbReference type="PANTHER" id="PTHR30305">
    <property type="entry name" value="PROTEIN YJDM-RELATED"/>
    <property type="match status" value="1"/>
</dbReference>
<dbReference type="Pfam" id="PF07475">
    <property type="entry name" value="Hpr_kinase_C"/>
    <property type="match status" value="1"/>
</dbReference>
<dbReference type="Pfam" id="PF02603">
    <property type="entry name" value="Hpr_kinase_N"/>
    <property type="match status" value="1"/>
</dbReference>
<dbReference type="SUPFAM" id="SSF75138">
    <property type="entry name" value="HprK N-terminal domain-like"/>
    <property type="match status" value="1"/>
</dbReference>
<dbReference type="SUPFAM" id="SSF53795">
    <property type="entry name" value="PEP carboxykinase-like"/>
    <property type="match status" value="1"/>
</dbReference>
<protein>
    <recommendedName>
        <fullName evidence="1">HPr kinase/phosphorylase</fullName>
        <shortName evidence="1">HPrK/P</shortName>
        <ecNumber evidence="1">2.7.11.-</ecNumber>
        <ecNumber evidence="1">2.7.4.-</ecNumber>
    </recommendedName>
    <alternativeName>
        <fullName evidence="1">HPr(Ser) kinase/phosphorylase</fullName>
    </alternativeName>
</protein>
<reference key="1">
    <citation type="submission" date="2008-05" db="EMBL/GenBank/DDBJ databases">
        <title>Complete sequence of chromosome 1 of Ralstonia pickettii 12J.</title>
        <authorList>
            <person name="Lucas S."/>
            <person name="Copeland A."/>
            <person name="Lapidus A."/>
            <person name="Glavina del Rio T."/>
            <person name="Dalin E."/>
            <person name="Tice H."/>
            <person name="Bruce D."/>
            <person name="Goodwin L."/>
            <person name="Pitluck S."/>
            <person name="Meincke L."/>
            <person name="Brettin T."/>
            <person name="Detter J.C."/>
            <person name="Han C."/>
            <person name="Kuske C.R."/>
            <person name="Schmutz J."/>
            <person name="Larimer F."/>
            <person name="Land M."/>
            <person name="Hauser L."/>
            <person name="Kyrpides N."/>
            <person name="Mikhailova N."/>
            <person name="Marsh T."/>
            <person name="Richardson P."/>
        </authorList>
    </citation>
    <scope>NUCLEOTIDE SEQUENCE [LARGE SCALE GENOMIC DNA]</scope>
    <source>
        <strain>12J</strain>
    </source>
</reference>
<feature type="chain" id="PRO_1000139909" description="HPr kinase/phosphorylase">
    <location>
        <begin position="1"/>
        <end position="324"/>
    </location>
</feature>
<feature type="region of interest" description="Important for the catalytic mechanism of both phosphorylation and dephosphorylation" evidence="1">
    <location>
        <begin position="209"/>
        <end position="218"/>
    </location>
</feature>
<feature type="region of interest" description="Important for the catalytic mechanism of dephosphorylation" evidence="1">
    <location>
        <begin position="271"/>
        <end position="276"/>
    </location>
</feature>
<feature type="active site" evidence="1">
    <location>
        <position position="146"/>
    </location>
</feature>
<feature type="active site" evidence="1">
    <location>
        <position position="167"/>
    </location>
</feature>
<feature type="active site" description="Proton acceptor; for phosphorylation activity. Proton donor; for dephosphorylation activity" evidence="1">
    <location>
        <position position="185"/>
    </location>
</feature>
<feature type="active site" evidence="1">
    <location>
        <position position="250"/>
    </location>
</feature>
<feature type="binding site" evidence="1">
    <location>
        <begin position="161"/>
        <end position="168"/>
    </location>
    <ligand>
        <name>ATP</name>
        <dbReference type="ChEBI" id="CHEBI:30616"/>
    </ligand>
</feature>
<feature type="binding site" evidence="1">
    <location>
        <position position="168"/>
    </location>
    <ligand>
        <name>Mg(2+)</name>
        <dbReference type="ChEBI" id="CHEBI:18420"/>
    </ligand>
</feature>
<feature type="binding site" evidence="1">
    <location>
        <position position="210"/>
    </location>
    <ligand>
        <name>Mg(2+)</name>
        <dbReference type="ChEBI" id="CHEBI:18420"/>
    </ligand>
</feature>
<keyword id="KW-0067">ATP-binding</keyword>
<keyword id="KW-0418">Kinase</keyword>
<keyword id="KW-0460">Magnesium</keyword>
<keyword id="KW-0479">Metal-binding</keyword>
<keyword id="KW-0511">Multifunctional enzyme</keyword>
<keyword id="KW-0547">Nucleotide-binding</keyword>
<keyword id="KW-0723">Serine/threonine-protein kinase</keyword>
<keyword id="KW-0808">Transferase</keyword>
<gene>
    <name evidence="1" type="primary">hprK</name>
    <name type="ordered locus">Rpic_0260</name>
</gene>
<proteinExistence type="inferred from homology"/>
<evidence type="ECO:0000255" key="1">
    <source>
        <dbReference type="HAMAP-Rule" id="MF_01249"/>
    </source>
</evidence>